<organism>
    <name type="scientific">Xanthomonas campestris pv. campestris (strain ATCC 33913 / DSM 3586 / NCPPB 528 / LMG 568 / P 25)</name>
    <dbReference type="NCBI Taxonomy" id="190485"/>
    <lineage>
        <taxon>Bacteria</taxon>
        <taxon>Pseudomonadati</taxon>
        <taxon>Pseudomonadota</taxon>
        <taxon>Gammaproteobacteria</taxon>
        <taxon>Lysobacterales</taxon>
        <taxon>Lysobacteraceae</taxon>
        <taxon>Xanthomonas</taxon>
    </lineage>
</organism>
<sequence length="213" mass="23149">MGLTDTQQAILALIAERIETDGVPPSQTEIARAFGFKGVRAAQYHLEALEQAGAIRRVPGQARGIRLAGAAAHARAAPAEEPVRDDVLRLPVLGRVAAGLPIGADIGSDDFVVLDRVFFSPSPDYLLKVQGDSMRDEGIFNGDLIGVHRTRDARSGQIVVARIDEEITVKLLKIGKDRIRLLPRNPDYAPIEVLPDQDFAIEGLYCGLLRPNR</sequence>
<gene>
    <name evidence="1" type="primary">lexA2</name>
    <name type="ordered locus">XCC1721</name>
</gene>
<evidence type="ECO:0000255" key="1">
    <source>
        <dbReference type="HAMAP-Rule" id="MF_00015"/>
    </source>
</evidence>
<reference key="1">
    <citation type="journal article" date="2002" name="Nature">
        <title>Comparison of the genomes of two Xanthomonas pathogens with differing host specificities.</title>
        <authorList>
            <person name="da Silva A.C.R."/>
            <person name="Ferro J.A."/>
            <person name="Reinach F.C."/>
            <person name="Farah C.S."/>
            <person name="Furlan L.R."/>
            <person name="Quaggio R.B."/>
            <person name="Monteiro-Vitorello C.B."/>
            <person name="Van Sluys M.A."/>
            <person name="Almeida N.F. Jr."/>
            <person name="Alves L.M.C."/>
            <person name="do Amaral A.M."/>
            <person name="Bertolini M.C."/>
            <person name="Camargo L.E.A."/>
            <person name="Camarotte G."/>
            <person name="Cannavan F."/>
            <person name="Cardozo J."/>
            <person name="Chambergo F."/>
            <person name="Ciapina L.P."/>
            <person name="Cicarelli R.M.B."/>
            <person name="Coutinho L.L."/>
            <person name="Cursino-Santos J.R."/>
            <person name="El-Dorry H."/>
            <person name="Faria J.B."/>
            <person name="Ferreira A.J.S."/>
            <person name="Ferreira R.C.C."/>
            <person name="Ferro M.I.T."/>
            <person name="Formighieri E.F."/>
            <person name="Franco M.C."/>
            <person name="Greggio C.C."/>
            <person name="Gruber A."/>
            <person name="Katsuyama A.M."/>
            <person name="Kishi L.T."/>
            <person name="Leite R.P."/>
            <person name="Lemos E.G.M."/>
            <person name="Lemos M.V.F."/>
            <person name="Locali E.C."/>
            <person name="Machado M.A."/>
            <person name="Madeira A.M.B.N."/>
            <person name="Martinez-Rossi N.M."/>
            <person name="Martins E.C."/>
            <person name="Meidanis J."/>
            <person name="Menck C.F.M."/>
            <person name="Miyaki C.Y."/>
            <person name="Moon D.H."/>
            <person name="Moreira L.M."/>
            <person name="Novo M.T.M."/>
            <person name="Okura V.K."/>
            <person name="Oliveira M.C."/>
            <person name="Oliveira V.R."/>
            <person name="Pereira H.A."/>
            <person name="Rossi A."/>
            <person name="Sena J.A.D."/>
            <person name="Silva C."/>
            <person name="de Souza R.F."/>
            <person name="Spinola L.A.F."/>
            <person name="Takita M.A."/>
            <person name="Tamura R.E."/>
            <person name="Teixeira E.C."/>
            <person name="Tezza R.I.D."/>
            <person name="Trindade dos Santos M."/>
            <person name="Truffi D."/>
            <person name="Tsai S.M."/>
            <person name="White F.F."/>
            <person name="Setubal J.C."/>
            <person name="Kitajima J.P."/>
        </authorList>
    </citation>
    <scope>NUCLEOTIDE SEQUENCE [LARGE SCALE GENOMIC DNA]</scope>
    <source>
        <strain>ATCC 33913 / DSM 3586 / NCPPB 528 / LMG 568 / P 25</strain>
    </source>
</reference>
<protein>
    <recommendedName>
        <fullName evidence="1">LexA repressor 2</fullName>
        <ecNumber evidence="1">3.4.21.88</ecNumber>
    </recommendedName>
</protein>
<keyword id="KW-0068">Autocatalytic cleavage</keyword>
<keyword id="KW-0227">DNA damage</keyword>
<keyword id="KW-0234">DNA repair</keyword>
<keyword id="KW-0235">DNA replication</keyword>
<keyword id="KW-0238">DNA-binding</keyword>
<keyword id="KW-0378">Hydrolase</keyword>
<keyword id="KW-1185">Reference proteome</keyword>
<keyword id="KW-0678">Repressor</keyword>
<keyword id="KW-0742">SOS response</keyword>
<keyword id="KW-0804">Transcription</keyword>
<keyword id="KW-0805">Transcription regulation</keyword>
<feature type="chain" id="PRO_0000170110" description="LexA repressor 2">
    <location>
        <begin position="1"/>
        <end position="213"/>
    </location>
</feature>
<feature type="DNA-binding region" description="H-T-H motif" evidence="1">
    <location>
        <begin position="27"/>
        <end position="47"/>
    </location>
</feature>
<feature type="active site" description="For autocatalytic cleavage activity" evidence="1">
    <location>
        <position position="133"/>
    </location>
</feature>
<feature type="active site" description="For autocatalytic cleavage activity" evidence="1">
    <location>
        <position position="170"/>
    </location>
</feature>
<feature type="site" description="Cleavage; by autolysis" evidence="1">
    <location>
        <begin position="98"/>
        <end position="99"/>
    </location>
</feature>
<comment type="function">
    <text evidence="1">Represses a number of genes involved in the response to DNA damage (SOS response), including recA and lexA. In the presence of single-stranded DNA, RecA interacts with LexA causing an autocatalytic cleavage which disrupts the DNA-binding part of LexA, leading to derepression of the SOS regulon and eventually DNA repair.</text>
</comment>
<comment type="catalytic activity">
    <reaction evidence="1">
        <text>Hydrolysis of Ala-|-Gly bond in repressor LexA.</text>
        <dbReference type="EC" id="3.4.21.88"/>
    </reaction>
</comment>
<comment type="subunit">
    <text evidence="1">Homodimer.</text>
</comment>
<comment type="similarity">
    <text evidence="1">Belongs to the peptidase S24 family.</text>
</comment>
<proteinExistence type="inferred from homology"/>
<accession>Q8P9X2</accession>
<dbReference type="EC" id="3.4.21.88" evidence="1"/>
<dbReference type="EMBL" id="AE008922">
    <property type="protein sequence ID" value="AAM41015.1"/>
    <property type="molecule type" value="Genomic_DNA"/>
</dbReference>
<dbReference type="RefSeq" id="NP_637091.1">
    <property type="nucleotide sequence ID" value="NC_003902.1"/>
</dbReference>
<dbReference type="SMR" id="Q8P9X2"/>
<dbReference type="STRING" id="190485.XCC1721"/>
<dbReference type="MEROPS" id="S24.001"/>
<dbReference type="EnsemblBacteria" id="AAM41015">
    <property type="protein sequence ID" value="AAM41015"/>
    <property type="gene ID" value="XCC1721"/>
</dbReference>
<dbReference type="KEGG" id="xcc:XCC1721"/>
<dbReference type="PATRIC" id="fig|190485.4.peg.1837"/>
<dbReference type="eggNOG" id="COG1974">
    <property type="taxonomic scope" value="Bacteria"/>
</dbReference>
<dbReference type="HOGENOM" id="CLU_066192_45_3_6"/>
<dbReference type="OrthoDB" id="9802364at2"/>
<dbReference type="Proteomes" id="UP000001010">
    <property type="component" value="Chromosome"/>
</dbReference>
<dbReference type="GO" id="GO:0032993">
    <property type="term" value="C:protein-DNA complex"/>
    <property type="evidence" value="ECO:0000318"/>
    <property type="project" value="GO_Central"/>
</dbReference>
<dbReference type="GO" id="GO:0001217">
    <property type="term" value="F:DNA-binding transcription repressor activity"/>
    <property type="evidence" value="ECO:0000318"/>
    <property type="project" value="GO_Central"/>
</dbReference>
<dbReference type="GO" id="GO:0043565">
    <property type="term" value="F:sequence-specific DNA binding"/>
    <property type="evidence" value="ECO:0000318"/>
    <property type="project" value="GO_Central"/>
</dbReference>
<dbReference type="GO" id="GO:0004252">
    <property type="term" value="F:serine-type endopeptidase activity"/>
    <property type="evidence" value="ECO:0007669"/>
    <property type="project" value="UniProtKB-UniRule"/>
</dbReference>
<dbReference type="GO" id="GO:0006281">
    <property type="term" value="P:DNA repair"/>
    <property type="evidence" value="ECO:0007669"/>
    <property type="project" value="UniProtKB-UniRule"/>
</dbReference>
<dbReference type="GO" id="GO:0006260">
    <property type="term" value="P:DNA replication"/>
    <property type="evidence" value="ECO:0007669"/>
    <property type="project" value="UniProtKB-UniRule"/>
</dbReference>
<dbReference type="GO" id="GO:0045892">
    <property type="term" value="P:negative regulation of DNA-templated transcription"/>
    <property type="evidence" value="ECO:0000318"/>
    <property type="project" value="GO_Central"/>
</dbReference>
<dbReference type="GO" id="GO:0006508">
    <property type="term" value="P:proteolysis"/>
    <property type="evidence" value="ECO:0007669"/>
    <property type="project" value="InterPro"/>
</dbReference>
<dbReference type="GO" id="GO:0009432">
    <property type="term" value="P:SOS response"/>
    <property type="evidence" value="ECO:0000318"/>
    <property type="project" value="GO_Central"/>
</dbReference>
<dbReference type="CDD" id="cd06529">
    <property type="entry name" value="S24_LexA-like"/>
    <property type="match status" value="1"/>
</dbReference>
<dbReference type="FunFam" id="1.10.10.10:FF:000009">
    <property type="entry name" value="LexA repressor"/>
    <property type="match status" value="1"/>
</dbReference>
<dbReference type="FunFam" id="2.10.109.10:FF:000001">
    <property type="entry name" value="LexA repressor"/>
    <property type="match status" value="1"/>
</dbReference>
<dbReference type="Gene3D" id="2.10.109.10">
    <property type="entry name" value="Umud Fragment, subunit A"/>
    <property type="match status" value="1"/>
</dbReference>
<dbReference type="Gene3D" id="1.10.10.10">
    <property type="entry name" value="Winged helix-like DNA-binding domain superfamily/Winged helix DNA-binding domain"/>
    <property type="match status" value="1"/>
</dbReference>
<dbReference type="HAMAP" id="MF_00015">
    <property type="entry name" value="LexA"/>
    <property type="match status" value="1"/>
</dbReference>
<dbReference type="InterPro" id="IPR006200">
    <property type="entry name" value="LexA"/>
</dbReference>
<dbReference type="InterPro" id="IPR039418">
    <property type="entry name" value="LexA-like"/>
</dbReference>
<dbReference type="InterPro" id="IPR036286">
    <property type="entry name" value="LexA/Signal_pep-like_sf"/>
</dbReference>
<dbReference type="InterPro" id="IPR006199">
    <property type="entry name" value="LexA_DNA-bd_dom"/>
</dbReference>
<dbReference type="InterPro" id="IPR050077">
    <property type="entry name" value="LexA_repressor"/>
</dbReference>
<dbReference type="InterPro" id="IPR006197">
    <property type="entry name" value="Peptidase_S24_LexA"/>
</dbReference>
<dbReference type="InterPro" id="IPR015927">
    <property type="entry name" value="Peptidase_S24_S26A/B/C"/>
</dbReference>
<dbReference type="InterPro" id="IPR036388">
    <property type="entry name" value="WH-like_DNA-bd_sf"/>
</dbReference>
<dbReference type="InterPro" id="IPR036390">
    <property type="entry name" value="WH_DNA-bd_sf"/>
</dbReference>
<dbReference type="NCBIfam" id="TIGR00498">
    <property type="entry name" value="lexA"/>
    <property type="match status" value="1"/>
</dbReference>
<dbReference type="PANTHER" id="PTHR33516">
    <property type="entry name" value="LEXA REPRESSOR"/>
    <property type="match status" value="1"/>
</dbReference>
<dbReference type="PANTHER" id="PTHR33516:SF2">
    <property type="entry name" value="LEXA REPRESSOR-RELATED"/>
    <property type="match status" value="1"/>
</dbReference>
<dbReference type="Pfam" id="PF01726">
    <property type="entry name" value="LexA_DNA_bind"/>
    <property type="match status" value="1"/>
</dbReference>
<dbReference type="Pfam" id="PF00717">
    <property type="entry name" value="Peptidase_S24"/>
    <property type="match status" value="1"/>
</dbReference>
<dbReference type="PRINTS" id="PR00726">
    <property type="entry name" value="LEXASERPTASE"/>
</dbReference>
<dbReference type="SUPFAM" id="SSF51306">
    <property type="entry name" value="LexA/Signal peptidase"/>
    <property type="match status" value="1"/>
</dbReference>
<dbReference type="SUPFAM" id="SSF46785">
    <property type="entry name" value="Winged helix' DNA-binding domain"/>
    <property type="match status" value="1"/>
</dbReference>
<name>LEXA2_XANCP</name>